<accession>B4TNH8</accession>
<sequence length="193" mass="21236">MRLCDRDIEAWLDEGRLSITPRPPVERINGATVDVRLGNKFRTFRGHTAAFIDLSGPKDEVSAALDRVMSDEIVLPDGEAFYLHPGELALAVTFESVTLPPDLVGWLDGRSSLARLGLMVHVTAHRIDPGWSGCIVLEFYNSGKLPLALRPGMLIGALSFEPLSGPAARPYNRRQDAKYRDQQGAVASRIDKD</sequence>
<dbReference type="EC" id="3.5.4.13" evidence="1"/>
<dbReference type="EMBL" id="CP001127">
    <property type="protein sequence ID" value="ACF90906.1"/>
    <property type="molecule type" value="Genomic_DNA"/>
</dbReference>
<dbReference type="RefSeq" id="WP_001234783.1">
    <property type="nucleotide sequence ID" value="NC_011094.1"/>
</dbReference>
<dbReference type="SMR" id="B4TNH8"/>
<dbReference type="KEGG" id="sew:SeSA_A2355"/>
<dbReference type="HOGENOM" id="CLU_087476_2_0_6"/>
<dbReference type="UniPathway" id="UPA00610">
    <property type="reaction ID" value="UER00665"/>
</dbReference>
<dbReference type="Proteomes" id="UP000001865">
    <property type="component" value="Chromosome"/>
</dbReference>
<dbReference type="GO" id="GO:0008829">
    <property type="term" value="F:dCTP deaminase activity"/>
    <property type="evidence" value="ECO:0007669"/>
    <property type="project" value="UniProtKB-UniRule"/>
</dbReference>
<dbReference type="GO" id="GO:0000166">
    <property type="term" value="F:nucleotide binding"/>
    <property type="evidence" value="ECO:0007669"/>
    <property type="project" value="UniProtKB-KW"/>
</dbReference>
<dbReference type="GO" id="GO:0006226">
    <property type="term" value="P:dUMP biosynthetic process"/>
    <property type="evidence" value="ECO:0007669"/>
    <property type="project" value="UniProtKB-UniPathway"/>
</dbReference>
<dbReference type="GO" id="GO:0006229">
    <property type="term" value="P:dUTP biosynthetic process"/>
    <property type="evidence" value="ECO:0007669"/>
    <property type="project" value="UniProtKB-UniRule"/>
</dbReference>
<dbReference type="GO" id="GO:0015949">
    <property type="term" value="P:nucleobase-containing small molecule interconversion"/>
    <property type="evidence" value="ECO:0007669"/>
    <property type="project" value="TreeGrafter"/>
</dbReference>
<dbReference type="CDD" id="cd07557">
    <property type="entry name" value="trimeric_dUTPase"/>
    <property type="match status" value="1"/>
</dbReference>
<dbReference type="FunFam" id="2.70.40.10:FF:000003">
    <property type="entry name" value="dCTP deaminase"/>
    <property type="match status" value="1"/>
</dbReference>
<dbReference type="Gene3D" id="2.70.40.10">
    <property type="match status" value="1"/>
</dbReference>
<dbReference type="HAMAP" id="MF_00146">
    <property type="entry name" value="dCTP_deaminase"/>
    <property type="match status" value="1"/>
</dbReference>
<dbReference type="InterPro" id="IPR011962">
    <property type="entry name" value="dCTP_deaminase"/>
</dbReference>
<dbReference type="InterPro" id="IPR036157">
    <property type="entry name" value="dUTPase-like_sf"/>
</dbReference>
<dbReference type="InterPro" id="IPR033704">
    <property type="entry name" value="dUTPase_trimeric"/>
</dbReference>
<dbReference type="NCBIfam" id="TIGR02274">
    <property type="entry name" value="dCTP_deam"/>
    <property type="match status" value="1"/>
</dbReference>
<dbReference type="PANTHER" id="PTHR42680">
    <property type="entry name" value="DCTP DEAMINASE"/>
    <property type="match status" value="1"/>
</dbReference>
<dbReference type="PANTHER" id="PTHR42680:SF3">
    <property type="entry name" value="DCTP DEAMINASE"/>
    <property type="match status" value="1"/>
</dbReference>
<dbReference type="Pfam" id="PF22769">
    <property type="entry name" value="DCD"/>
    <property type="match status" value="1"/>
</dbReference>
<dbReference type="SUPFAM" id="SSF51283">
    <property type="entry name" value="dUTPase-like"/>
    <property type="match status" value="1"/>
</dbReference>
<name>DCD_SALSV</name>
<comment type="function">
    <text evidence="1">Catalyzes the deamination of dCTP to dUTP.</text>
</comment>
<comment type="catalytic activity">
    <reaction evidence="1">
        <text>dCTP + H2O + H(+) = dUTP + NH4(+)</text>
        <dbReference type="Rhea" id="RHEA:22680"/>
        <dbReference type="ChEBI" id="CHEBI:15377"/>
        <dbReference type="ChEBI" id="CHEBI:15378"/>
        <dbReference type="ChEBI" id="CHEBI:28938"/>
        <dbReference type="ChEBI" id="CHEBI:61481"/>
        <dbReference type="ChEBI" id="CHEBI:61555"/>
        <dbReference type="EC" id="3.5.4.13"/>
    </reaction>
</comment>
<comment type="pathway">
    <text evidence="1">Pyrimidine metabolism; dUMP biosynthesis; dUMP from dCTP (dUTP route): step 1/2.</text>
</comment>
<comment type="subunit">
    <text evidence="1">Homotrimer.</text>
</comment>
<comment type="similarity">
    <text evidence="1">Belongs to the dCTP deaminase family.</text>
</comment>
<keyword id="KW-0378">Hydrolase</keyword>
<keyword id="KW-0546">Nucleotide metabolism</keyword>
<keyword id="KW-0547">Nucleotide-binding</keyword>
<reference key="1">
    <citation type="journal article" date="2011" name="J. Bacteriol.">
        <title>Comparative genomics of 28 Salmonella enterica isolates: evidence for CRISPR-mediated adaptive sublineage evolution.</title>
        <authorList>
            <person name="Fricke W.F."/>
            <person name="Mammel M.K."/>
            <person name="McDermott P.F."/>
            <person name="Tartera C."/>
            <person name="White D.G."/>
            <person name="Leclerc J.E."/>
            <person name="Ravel J."/>
            <person name="Cebula T.A."/>
        </authorList>
    </citation>
    <scope>NUCLEOTIDE SEQUENCE [LARGE SCALE GENOMIC DNA]</scope>
    <source>
        <strain>CVM19633</strain>
    </source>
</reference>
<feature type="chain" id="PRO_1000096453" description="dCTP deaminase">
    <location>
        <begin position="1"/>
        <end position="193"/>
    </location>
</feature>
<feature type="region of interest" description="Disordered" evidence="2">
    <location>
        <begin position="169"/>
        <end position="193"/>
    </location>
</feature>
<feature type="active site" description="Proton donor/acceptor" evidence="1">
    <location>
        <position position="138"/>
    </location>
</feature>
<feature type="binding site" evidence="1">
    <location>
        <begin position="110"/>
        <end position="115"/>
    </location>
    <ligand>
        <name>dCTP</name>
        <dbReference type="ChEBI" id="CHEBI:61481"/>
    </ligand>
</feature>
<feature type="binding site" evidence="1">
    <location>
        <position position="128"/>
    </location>
    <ligand>
        <name>dCTP</name>
        <dbReference type="ChEBI" id="CHEBI:61481"/>
    </ligand>
</feature>
<feature type="binding site" evidence="1">
    <location>
        <begin position="136"/>
        <end position="138"/>
    </location>
    <ligand>
        <name>dCTP</name>
        <dbReference type="ChEBI" id="CHEBI:61481"/>
    </ligand>
</feature>
<feature type="binding site" evidence="1">
    <location>
        <position position="171"/>
    </location>
    <ligand>
        <name>dCTP</name>
        <dbReference type="ChEBI" id="CHEBI:61481"/>
    </ligand>
</feature>
<feature type="binding site" evidence="1">
    <location>
        <position position="178"/>
    </location>
    <ligand>
        <name>dCTP</name>
        <dbReference type="ChEBI" id="CHEBI:61481"/>
    </ligand>
</feature>
<feature type="binding site" evidence="1">
    <location>
        <position position="182"/>
    </location>
    <ligand>
        <name>dCTP</name>
        <dbReference type="ChEBI" id="CHEBI:61481"/>
    </ligand>
</feature>
<proteinExistence type="inferred from homology"/>
<evidence type="ECO:0000255" key="1">
    <source>
        <dbReference type="HAMAP-Rule" id="MF_00146"/>
    </source>
</evidence>
<evidence type="ECO:0000256" key="2">
    <source>
        <dbReference type="SAM" id="MobiDB-lite"/>
    </source>
</evidence>
<gene>
    <name evidence="1" type="primary">dcd</name>
    <name type="ordered locus">SeSA_A2355</name>
</gene>
<protein>
    <recommendedName>
        <fullName evidence="1">dCTP deaminase</fullName>
        <ecNumber evidence="1">3.5.4.13</ecNumber>
    </recommendedName>
    <alternativeName>
        <fullName evidence="1">Deoxycytidine triphosphate deaminase</fullName>
    </alternativeName>
</protein>
<organism>
    <name type="scientific">Salmonella schwarzengrund (strain CVM19633)</name>
    <dbReference type="NCBI Taxonomy" id="439843"/>
    <lineage>
        <taxon>Bacteria</taxon>
        <taxon>Pseudomonadati</taxon>
        <taxon>Pseudomonadota</taxon>
        <taxon>Gammaproteobacteria</taxon>
        <taxon>Enterobacterales</taxon>
        <taxon>Enterobacteriaceae</taxon>
        <taxon>Salmonella</taxon>
    </lineage>
</organism>